<evidence type="ECO:0000255" key="1">
    <source>
        <dbReference type="HAMAP-Rule" id="MF_00176"/>
    </source>
</evidence>
<proteinExistence type="inferred from homology"/>
<protein>
    <recommendedName>
        <fullName evidence="1">Serine--tRNA ligase</fullName>
        <ecNumber evidence="1">6.1.1.11</ecNumber>
    </recommendedName>
    <alternativeName>
        <fullName evidence="1">Seryl-tRNA synthetase</fullName>
        <shortName evidence="1">SerRS</shortName>
    </alternativeName>
    <alternativeName>
        <fullName evidence="1">Seryl-tRNA(Ser/Sec) synthetase</fullName>
    </alternativeName>
</protein>
<keyword id="KW-0030">Aminoacyl-tRNA synthetase</keyword>
<keyword id="KW-0067">ATP-binding</keyword>
<keyword id="KW-0963">Cytoplasm</keyword>
<keyword id="KW-0436">Ligase</keyword>
<keyword id="KW-0547">Nucleotide-binding</keyword>
<keyword id="KW-0648">Protein biosynthesis</keyword>
<keyword id="KW-1185">Reference proteome</keyword>
<comment type="function">
    <text evidence="1">Catalyzes the attachment of serine to tRNA(Ser). Is also able to aminoacylate tRNA(Sec) with serine, to form the misacylated tRNA L-seryl-tRNA(Sec), which will be further converted into selenocysteinyl-tRNA(Sec).</text>
</comment>
<comment type="catalytic activity">
    <reaction evidence="1">
        <text>tRNA(Ser) + L-serine + ATP = L-seryl-tRNA(Ser) + AMP + diphosphate + H(+)</text>
        <dbReference type="Rhea" id="RHEA:12292"/>
        <dbReference type="Rhea" id="RHEA-COMP:9669"/>
        <dbReference type="Rhea" id="RHEA-COMP:9703"/>
        <dbReference type="ChEBI" id="CHEBI:15378"/>
        <dbReference type="ChEBI" id="CHEBI:30616"/>
        <dbReference type="ChEBI" id="CHEBI:33019"/>
        <dbReference type="ChEBI" id="CHEBI:33384"/>
        <dbReference type="ChEBI" id="CHEBI:78442"/>
        <dbReference type="ChEBI" id="CHEBI:78533"/>
        <dbReference type="ChEBI" id="CHEBI:456215"/>
        <dbReference type="EC" id="6.1.1.11"/>
    </reaction>
</comment>
<comment type="catalytic activity">
    <reaction evidence="1">
        <text>tRNA(Sec) + L-serine + ATP = L-seryl-tRNA(Sec) + AMP + diphosphate + H(+)</text>
        <dbReference type="Rhea" id="RHEA:42580"/>
        <dbReference type="Rhea" id="RHEA-COMP:9742"/>
        <dbReference type="Rhea" id="RHEA-COMP:10128"/>
        <dbReference type="ChEBI" id="CHEBI:15378"/>
        <dbReference type="ChEBI" id="CHEBI:30616"/>
        <dbReference type="ChEBI" id="CHEBI:33019"/>
        <dbReference type="ChEBI" id="CHEBI:33384"/>
        <dbReference type="ChEBI" id="CHEBI:78442"/>
        <dbReference type="ChEBI" id="CHEBI:78533"/>
        <dbReference type="ChEBI" id="CHEBI:456215"/>
        <dbReference type="EC" id="6.1.1.11"/>
    </reaction>
</comment>
<comment type="pathway">
    <text evidence="1">Aminoacyl-tRNA biosynthesis; selenocysteinyl-tRNA(Sec) biosynthesis; L-seryl-tRNA(Sec) from L-serine and tRNA(Sec): step 1/1.</text>
</comment>
<comment type="subunit">
    <text evidence="1">Homodimer. The tRNA molecule binds across the dimer.</text>
</comment>
<comment type="subcellular location">
    <subcellularLocation>
        <location evidence="1">Cytoplasm</location>
    </subcellularLocation>
</comment>
<comment type="domain">
    <text evidence="1">Consists of two distinct domains, a catalytic core and a N-terminal extension that is involved in tRNA binding.</text>
</comment>
<comment type="similarity">
    <text evidence="1">Belongs to the class-II aminoacyl-tRNA synthetase family. Type-1 seryl-tRNA synthetase subfamily.</text>
</comment>
<sequence length="425" mass="45690">MHDIRLIREDPAAFDAAIARRGAESASSRLLALDERRRAIATELQAAQTRRNEASKAIGQAKAQKDEATASALMAEVAALKERMPALEAEGAEVEAALDAALAAIPNLPAADVPDGADEQDNAEQHRWGTPPAFAFEAREHADFAGPLGLDFEAAAAISGARFAVLKGGIARLQRALGAFMLDRQTAAGFTEVIPPLLVRDEAVFGTGQLPKFAEDLFRTTDGRWLIPTAEVSLTNLVREQIVAEAELPMKMTALTPCFRSEAGAAGRDTRGLIRQHQFEKVELVAITTPEQSDAVHEAMTKAAEAILEALGLPYRRVLLCTGDMGFTARKTFDLEVWLPGQGCYREISSVSNCGDFQARRMNARYRPAGESKGTRFVHTLNGSGLAVGRTLVAVLENYQQADGSVTIPEALVPYMGGIAELRPA</sequence>
<name>SYS_RHIWR</name>
<reference key="1">
    <citation type="journal article" date="2010" name="J. Bacteriol.">
        <title>Genome sequence of the dioxin-mineralizing bacterium Sphingomonas wittichii RW1.</title>
        <authorList>
            <person name="Miller T.R."/>
            <person name="Delcher A.L."/>
            <person name="Salzberg S.L."/>
            <person name="Saunders E."/>
            <person name="Detter J.C."/>
            <person name="Halden R.U."/>
        </authorList>
    </citation>
    <scope>NUCLEOTIDE SEQUENCE [LARGE SCALE GENOMIC DNA]</scope>
    <source>
        <strain>DSM 6014 / CCUG 31198 / JCM 15750 / NBRC 105917 / EY 4224 / RW1</strain>
    </source>
</reference>
<accession>A5V3Y9</accession>
<dbReference type="EC" id="6.1.1.11" evidence="1"/>
<dbReference type="EMBL" id="CP000699">
    <property type="protein sequence ID" value="ABQ67005.1"/>
    <property type="molecule type" value="Genomic_DNA"/>
</dbReference>
<dbReference type="SMR" id="A5V3Y9"/>
<dbReference type="STRING" id="392499.Swit_0637"/>
<dbReference type="PaxDb" id="392499-Swit_0637"/>
<dbReference type="KEGG" id="swi:Swit_0637"/>
<dbReference type="eggNOG" id="COG0172">
    <property type="taxonomic scope" value="Bacteria"/>
</dbReference>
<dbReference type="HOGENOM" id="CLU_023797_1_1_5"/>
<dbReference type="OrthoDB" id="9804647at2"/>
<dbReference type="UniPathway" id="UPA00906">
    <property type="reaction ID" value="UER00895"/>
</dbReference>
<dbReference type="Proteomes" id="UP000001989">
    <property type="component" value="Chromosome"/>
</dbReference>
<dbReference type="GO" id="GO:0005737">
    <property type="term" value="C:cytoplasm"/>
    <property type="evidence" value="ECO:0007669"/>
    <property type="project" value="UniProtKB-SubCell"/>
</dbReference>
<dbReference type="GO" id="GO:0005524">
    <property type="term" value="F:ATP binding"/>
    <property type="evidence" value="ECO:0007669"/>
    <property type="project" value="UniProtKB-UniRule"/>
</dbReference>
<dbReference type="GO" id="GO:0004828">
    <property type="term" value="F:serine-tRNA ligase activity"/>
    <property type="evidence" value="ECO:0007669"/>
    <property type="project" value="UniProtKB-UniRule"/>
</dbReference>
<dbReference type="GO" id="GO:0016260">
    <property type="term" value="P:selenocysteine biosynthetic process"/>
    <property type="evidence" value="ECO:0007669"/>
    <property type="project" value="UniProtKB-UniRule"/>
</dbReference>
<dbReference type="GO" id="GO:0006434">
    <property type="term" value="P:seryl-tRNA aminoacylation"/>
    <property type="evidence" value="ECO:0007669"/>
    <property type="project" value="UniProtKB-UniRule"/>
</dbReference>
<dbReference type="CDD" id="cd00770">
    <property type="entry name" value="SerRS_core"/>
    <property type="match status" value="1"/>
</dbReference>
<dbReference type="Gene3D" id="3.30.930.10">
    <property type="entry name" value="Bira Bifunctional Protein, Domain 2"/>
    <property type="match status" value="1"/>
</dbReference>
<dbReference type="Gene3D" id="1.10.287.40">
    <property type="entry name" value="Serine-tRNA synthetase, tRNA binding domain"/>
    <property type="match status" value="1"/>
</dbReference>
<dbReference type="HAMAP" id="MF_00176">
    <property type="entry name" value="Ser_tRNA_synth_type1"/>
    <property type="match status" value="1"/>
</dbReference>
<dbReference type="InterPro" id="IPR002314">
    <property type="entry name" value="aa-tRNA-synt_IIb"/>
</dbReference>
<dbReference type="InterPro" id="IPR006195">
    <property type="entry name" value="aa-tRNA-synth_II"/>
</dbReference>
<dbReference type="InterPro" id="IPR045864">
    <property type="entry name" value="aa-tRNA-synth_II/BPL/LPL"/>
</dbReference>
<dbReference type="InterPro" id="IPR002317">
    <property type="entry name" value="Ser-tRNA-ligase_type_1"/>
</dbReference>
<dbReference type="InterPro" id="IPR015866">
    <property type="entry name" value="Ser-tRNA-synth_1_N"/>
</dbReference>
<dbReference type="InterPro" id="IPR042103">
    <property type="entry name" value="SerRS_1_N_sf"/>
</dbReference>
<dbReference type="InterPro" id="IPR033729">
    <property type="entry name" value="SerRS_core"/>
</dbReference>
<dbReference type="InterPro" id="IPR010978">
    <property type="entry name" value="tRNA-bd_arm"/>
</dbReference>
<dbReference type="NCBIfam" id="TIGR00414">
    <property type="entry name" value="serS"/>
    <property type="match status" value="1"/>
</dbReference>
<dbReference type="PANTHER" id="PTHR43697:SF1">
    <property type="entry name" value="SERINE--TRNA LIGASE"/>
    <property type="match status" value="1"/>
</dbReference>
<dbReference type="PANTHER" id="PTHR43697">
    <property type="entry name" value="SERYL-TRNA SYNTHETASE"/>
    <property type="match status" value="1"/>
</dbReference>
<dbReference type="Pfam" id="PF02403">
    <property type="entry name" value="Seryl_tRNA_N"/>
    <property type="match status" value="1"/>
</dbReference>
<dbReference type="Pfam" id="PF00587">
    <property type="entry name" value="tRNA-synt_2b"/>
    <property type="match status" value="1"/>
</dbReference>
<dbReference type="PIRSF" id="PIRSF001529">
    <property type="entry name" value="Ser-tRNA-synth_IIa"/>
    <property type="match status" value="1"/>
</dbReference>
<dbReference type="PRINTS" id="PR00981">
    <property type="entry name" value="TRNASYNTHSER"/>
</dbReference>
<dbReference type="SUPFAM" id="SSF55681">
    <property type="entry name" value="Class II aaRS and biotin synthetases"/>
    <property type="match status" value="1"/>
</dbReference>
<dbReference type="SUPFAM" id="SSF46589">
    <property type="entry name" value="tRNA-binding arm"/>
    <property type="match status" value="1"/>
</dbReference>
<dbReference type="PROSITE" id="PS50862">
    <property type="entry name" value="AA_TRNA_LIGASE_II"/>
    <property type="match status" value="1"/>
</dbReference>
<feature type="chain" id="PRO_1000019828" description="Serine--tRNA ligase">
    <location>
        <begin position="1"/>
        <end position="425"/>
    </location>
</feature>
<feature type="binding site" evidence="1">
    <location>
        <begin position="229"/>
        <end position="231"/>
    </location>
    <ligand>
        <name>L-serine</name>
        <dbReference type="ChEBI" id="CHEBI:33384"/>
    </ligand>
</feature>
<feature type="binding site" evidence="1">
    <location>
        <begin position="260"/>
        <end position="262"/>
    </location>
    <ligand>
        <name>ATP</name>
        <dbReference type="ChEBI" id="CHEBI:30616"/>
    </ligand>
</feature>
<feature type="binding site" evidence="1">
    <location>
        <position position="283"/>
    </location>
    <ligand>
        <name>L-serine</name>
        <dbReference type="ChEBI" id="CHEBI:33384"/>
    </ligand>
</feature>
<feature type="binding site" evidence="1">
    <location>
        <begin position="347"/>
        <end position="350"/>
    </location>
    <ligand>
        <name>ATP</name>
        <dbReference type="ChEBI" id="CHEBI:30616"/>
    </ligand>
</feature>
<feature type="binding site" evidence="1">
    <location>
        <position position="384"/>
    </location>
    <ligand>
        <name>L-serine</name>
        <dbReference type="ChEBI" id="CHEBI:33384"/>
    </ligand>
</feature>
<organism>
    <name type="scientific">Rhizorhabdus wittichii (strain DSM 6014 / CCUG 31198 / JCM 15750 / NBRC 105917 / EY 4224 / RW1)</name>
    <name type="common">Sphingomonas wittichii</name>
    <dbReference type="NCBI Taxonomy" id="392499"/>
    <lineage>
        <taxon>Bacteria</taxon>
        <taxon>Pseudomonadati</taxon>
        <taxon>Pseudomonadota</taxon>
        <taxon>Alphaproteobacteria</taxon>
        <taxon>Sphingomonadales</taxon>
        <taxon>Sphingomonadaceae</taxon>
        <taxon>Rhizorhabdus</taxon>
    </lineage>
</organism>
<gene>
    <name evidence="1" type="primary">serS</name>
    <name type="ordered locus">Swit_0637</name>
</gene>